<gene>
    <name type="ordered locus">MRA_1229</name>
</gene>
<name>Y1229_MYCTA</name>
<comment type="similarity">
    <text evidence="2">Belongs to the class I-like SAM-binding methyltransferase superfamily. Cation-dependent O-methyltransferase family.</text>
</comment>
<comment type="sequence caution" evidence="4">
    <conflict type="erroneous initiation">
        <sequence resource="EMBL-CDS" id="ABQ72968"/>
    </conflict>
    <text>Truncated N-terminus.</text>
</comment>
<organism>
    <name type="scientific">Mycobacterium tuberculosis (strain ATCC 25177 / H37Ra)</name>
    <dbReference type="NCBI Taxonomy" id="419947"/>
    <lineage>
        <taxon>Bacteria</taxon>
        <taxon>Bacillati</taxon>
        <taxon>Actinomycetota</taxon>
        <taxon>Actinomycetes</taxon>
        <taxon>Mycobacteriales</taxon>
        <taxon>Mycobacteriaceae</taxon>
        <taxon>Mycobacterium</taxon>
        <taxon>Mycobacterium tuberculosis complex</taxon>
    </lineage>
</organism>
<sequence length="224" mass="23033">MDGTPGHDDMPGQPAPSRGESLWAHAEGSISEDVILAGARERATDIGAGAVTPAVGALLCLLAKLSGGKAVAEVGTGAGVSGLWLLSGMRDDGVLTTIDIEPEHLRLARQAFAEAGIGPSRTRLISGRAQEVLTRLADASYDLVFIDADPIDQPDYVAEGVRLLRSGGVIVVHRAALGGRAGDPGARDAEVIAVREAARLIAEDERLTPALVPLGDGVLAAVRD</sequence>
<evidence type="ECO:0000250" key="1"/>
<evidence type="ECO:0000255" key="2">
    <source>
        <dbReference type="PROSITE-ProRule" id="PRU01019"/>
    </source>
</evidence>
<evidence type="ECO:0000256" key="3">
    <source>
        <dbReference type="SAM" id="MobiDB-lite"/>
    </source>
</evidence>
<evidence type="ECO:0000305" key="4"/>
<reference key="1">
    <citation type="journal article" date="2008" name="PLoS ONE">
        <title>Genetic basis of virulence attenuation revealed by comparative genomic analysis of Mycobacterium tuberculosis strain H37Ra versus H37Rv.</title>
        <authorList>
            <person name="Zheng H."/>
            <person name="Lu L."/>
            <person name="Wang B."/>
            <person name="Pu S."/>
            <person name="Zhang X."/>
            <person name="Zhu G."/>
            <person name="Shi W."/>
            <person name="Zhang L."/>
            <person name="Wang H."/>
            <person name="Wang S."/>
            <person name="Zhao G."/>
            <person name="Zhang Y."/>
        </authorList>
    </citation>
    <scope>NUCLEOTIDE SEQUENCE [LARGE SCALE GENOMIC DNA]</scope>
    <source>
        <strain>ATCC 25177 / H37Ra</strain>
    </source>
</reference>
<feature type="chain" id="PRO_0000380104" description="Putative O-methyltransferase MRA_1229">
    <location>
        <begin position="1"/>
        <end position="224"/>
    </location>
</feature>
<feature type="region of interest" description="Disordered" evidence="3">
    <location>
        <begin position="1"/>
        <end position="21"/>
    </location>
</feature>
<feature type="compositionally biased region" description="Basic and acidic residues" evidence="3">
    <location>
        <begin position="1"/>
        <end position="10"/>
    </location>
</feature>
<feature type="binding site" evidence="2">
    <location>
        <position position="51"/>
    </location>
    <ligand>
        <name>S-adenosyl-L-methionine</name>
        <dbReference type="ChEBI" id="CHEBI:59789"/>
    </ligand>
</feature>
<feature type="binding site" evidence="2">
    <location>
        <position position="73"/>
    </location>
    <ligand>
        <name>S-adenosyl-L-methionine</name>
        <dbReference type="ChEBI" id="CHEBI:59789"/>
    </ligand>
</feature>
<feature type="binding site" evidence="2">
    <location>
        <begin position="75"/>
        <end position="76"/>
    </location>
    <ligand>
        <name>S-adenosyl-L-methionine</name>
        <dbReference type="ChEBI" id="CHEBI:59789"/>
    </ligand>
</feature>
<feature type="binding site" evidence="2">
    <location>
        <position position="81"/>
    </location>
    <ligand>
        <name>S-adenosyl-L-methionine</name>
        <dbReference type="ChEBI" id="CHEBI:59789"/>
    </ligand>
</feature>
<feature type="binding site" evidence="2">
    <location>
        <position position="99"/>
    </location>
    <ligand>
        <name>S-adenosyl-L-methionine</name>
        <dbReference type="ChEBI" id="CHEBI:59789"/>
    </ligand>
</feature>
<feature type="binding site" evidence="2">
    <location>
        <position position="100"/>
    </location>
    <ligand>
        <name>S-adenosyl-L-methionine</name>
        <dbReference type="ChEBI" id="CHEBI:59789"/>
    </ligand>
</feature>
<feature type="binding site" evidence="1">
    <location>
        <position position="147"/>
    </location>
    <ligand>
        <name>substrate</name>
    </ligand>
</feature>
<feature type="binding site" evidence="2">
    <location>
        <position position="149"/>
    </location>
    <ligand>
        <name>S-adenosyl-L-methionine</name>
        <dbReference type="ChEBI" id="CHEBI:59789"/>
    </ligand>
</feature>
<dbReference type="EC" id="2.1.1.-"/>
<dbReference type="EMBL" id="CP000611">
    <property type="protein sequence ID" value="ABQ72968.1"/>
    <property type="status" value="ALT_INIT"/>
    <property type="molecule type" value="Genomic_DNA"/>
</dbReference>
<dbReference type="RefSeq" id="WP_003911448.1">
    <property type="nucleotide sequence ID" value="NZ_CP016972.1"/>
</dbReference>
<dbReference type="SMR" id="A5U1R8"/>
<dbReference type="KEGG" id="mra:MRA_1229"/>
<dbReference type="eggNOG" id="COG4122">
    <property type="taxonomic scope" value="Bacteria"/>
</dbReference>
<dbReference type="HOGENOM" id="CLU_067676_2_0_11"/>
<dbReference type="Proteomes" id="UP000001988">
    <property type="component" value="Chromosome"/>
</dbReference>
<dbReference type="GO" id="GO:0008171">
    <property type="term" value="F:O-methyltransferase activity"/>
    <property type="evidence" value="ECO:0007669"/>
    <property type="project" value="InterPro"/>
</dbReference>
<dbReference type="GO" id="GO:0008757">
    <property type="term" value="F:S-adenosylmethionine-dependent methyltransferase activity"/>
    <property type="evidence" value="ECO:0007669"/>
    <property type="project" value="TreeGrafter"/>
</dbReference>
<dbReference type="GO" id="GO:0032259">
    <property type="term" value="P:methylation"/>
    <property type="evidence" value="ECO:0007669"/>
    <property type="project" value="UniProtKB-KW"/>
</dbReference>
<dbReference type="CDD" id="cd02440">
    <property type="entry name" value="AdoMet_MTases"/>
    <property type="match status" value="1"/>
</dbReference>
<dbReference type="FunFam" id="3.40.50.150:FF:000374">
    <property type="entry name" value="Putative methyltransferase"/>
    <property type="match status" value="1"/>
</dbReference>
<dbReference type="Gene3D" id="3.40.50.150">
    <property type="entry name" value="Vaccinia Virus protein VP39"/>
    <property type="match status" value="1"/>
</dbReference>
<dbReference type="InterPro" id="IPR050362">
    <property type="entry name" value="Cation-dep_OMT"/>
</dbReference>
<dbReference type="InterPro" id="IPR029063">
    <property type="entry name" value="SAM-dependent_MTases_sf"/>
</dbReference>
<dbReference type="InterPro" id="IPR002935">
    <property type="entry name" value="SAM_O-MeTrfase"/>
</dbReference>
<dbReference type="PANTHER" id="PTHR10509:SF85">
    <property type="entry name" value="O-METHYLTRANSFERASE RV1220C-RELATED"/>
    <property type="match status" value="1"/>
</dbReference>
<dbReference type="PANTHER" id="PTHR10509">
    <property type="entry name" value="O-METHYLTRANSFERASE-RELATED"/>
    <property type="match status" value="1"/>
</dbReference>
<dbReference type="Pfam" id="PF01596">
    <property type="entry name" value="Methyltransf_3"/>
    <property type="match status" value="1"/>
</dbReference>
<dbReference type="SUPFAM" id="SSF53335">
    <property type="entry name" value="S-adenosyl-L-methionine-dependent methyltransferases"/>
    <property type="match status" value="1"/>
</dbReference>
<dbReference type="PROSITE" id="PS51682">
    <property type="entry name" value="SAM_OMT_I"/>
    <property type="match status" value="1"/>
</dbReference>
<proteinExistence type="inferred from homology"/>
<keyword id="KW-0489">Methyltransferase</keyword>
<keyword id="KW-1185">Reference proteome</keyword>
<keyword id="KW-0949">S-adenosyl-L-methionine</keyword>
<keyword id="KW-0808">Transferase</keyword>
<protein>
    <recommendedName>
        <fullName>Putative O-methyltransferase MRA_1229</fullName>
        <ecNumber>2.1.1.-</ecNumber>
    </recommendedName>
</protein>
<accession>A5U1R8</accession>